<accession>O31249</accession>
<evidence type="ECO:0000255" key="1">
    <source>
        <dbReference type="PROSITE-ProRule" id="PRU00593"/>
    </source>
</evidence>
<evidence type="ECO:0000269" key="2">
    <source>
    </source>
</evidence>
<keyword id="KW-0238">DNA-binding</keyword>
<keyword id="KW-0804">Transcription</keyword>
<keyword id="KW-0805">Transcription regulation</keyword>
<dbReference type="EMBL" id="AJ002316">
    <property type="protein sequence ID" value="CAA05332.1"/>
    <property type="molecule type" value="Genomic_DNA"/>
</dbReference>
<dbReference type="EMBL" id="CR543861">
    <property type="protein sequence ID" value="CAG68275.1"/>
    <property type="molecule type" value="Genomic_DNA"/>
</dbReference>
<dbReference type="RefSeq" id="WP_004925571.1">
    <property type="nucleotide sequence ID" value="NC_005966.1"/>
</dbReference>
<dbReference type="SMR" id="O31249"/>
<dbReference type="STRING" id="202950.GCA_001485005_01166"/>
<dbReference type="GeneID" id="45233824"/>
<dbReference type="KEGG" id="aci:ACIAD1410"/>
<dbReference type="eggNOG" id="COG2207">
    <property type="taxonomic scope" value="Bacteria"/>
</dbReference>
<dbReference type="HOGENOM" id="CLU_000445_81_0_6"/>
<dbReference type="OrthoDB" id="9783876at2"/>
<dbReference type="BioCyc" id="ASP62977:ACIAD_RS06510-MONOMER"/>
<dbReference type="UniPathway" id="UPA00191"/>
<dbReference type="Proteomes" id="UP000000430">
    <property type="component" value="Chromosome"/>
</dbReference>
<dbReference type="GO" id="GO:0003700">
    <property type="term" value="F:DNA-binding transcription factor activity"/>
    <property type="evidence" value="ECO:0007669"/>
    <property type="project" value="InterPro"/>
</dbReference>
<dbReference type="GO" id="GO:0043565">
    <property type="term" value="F:sequence-specific DNA binding"/>
    <property type="evidence" value="ECO:0007669"/>
    <property type="project" value="InterPro"/>
</dbReference>
<dbReference type="GO" id="GO:0043448">
    <property type="term" value="P:alkane catabolic process"/>
    <property type="evidence" value="ECO:0007669"/>
    <property type="project" value="UniProtKB-UniPathway"/>
</dbReference>
<dbReference type="Gene3D" id="1.10.10.60">
    <property type="entry name" value="Homeodomain-like"/>
    <property type="match status" value="2"/>
</dbReference>
<dbReference type="Gene3D" id="2.60.120.10">
    <property type="entry name" value="Jelly Rolls"/>
    <property type="match status" value="1"/>
</dbReference>
<dbReference type="InterPro" id="IPR032783">
    <property type="entry name" value="AraC_lig"/>
</dbReference>
<dbReference type="InterPro" id="IPR050204">
    <property type="entry name" value="AraC_XylS_family_regulators"/>
</dbReference>
<dbReference type="InterPro" id="IPR009057">
    <property type="entry name" value="Homeodomain-like_sf"/>
</dbReference>
<dbReference type="InterPro" id="IPR018060">
    <property type="entry name" value="HTH_AraC"/>
</dbReference>
<dbReference type="InterPro" id="IPR018062">
    <property type="entry name" value="HTH_AraC-typ_CS"/>
</dbReference>
<dbReference type="InterPro" id="IPR014710">
    <property type="entry name" value="RmlC-like_jellyroll"/>
</dbReference>
<dbReference type="InterPro" id="IPR011051">
    <property type="entry name" value="RmlC_Cupin_sf"/>
</dbReference>
<dbReference type="InterPro" id="IPR020449">
    <property type="entry name" value="Tscrpt_reg_AraC-type_HTH"/>
</dbReference>
<dbReference type="PANTHER" id="PTHR46796:SF7">
    <property type="entry name" value="ARAC FAMILY TRANSCRIPTIONAL REGULATOR"/>
    <property type="match status" value="1"/>
</dbReference>
<dbReference type="PANTHER" id="PTHR46796">
    <property type="entry name" value="HTH-TYPE TRANSCRIPTIONAL ACTIVATOR RHAS-RELATED"/>
    <property type="match status" value="1"/>
</dbReference>
<dbReference type="Pfam" id="PF12852">
    <property type="entry name" value="Cupin_6"/>
    <property type="match status" value="1"/>
</dbReference>
<dbReference type="Pfam" id="PF12833">
    <property type="entry name" value="HTH_18"/>
    <property type="match status" value="1"/>
</dbReference>
<dbReference type="PRINTS" id="PR00032">
    <property type="entry name" value="HTHARAC"/>
</dbReference>
<dbReference type="SMART" id="SM00342">
    <property type="entry name" value="HTH_ARAC"/>
    <property type="match status" value="1"/>
</dbReference>
<dbReference type="SUPFAM" id="SSF46689">
    <property type="entry name" value="Homeodomain-like"/>
    <property type="match status" value="2"/>
</dbReference>
<dbReference type="SUPFAM" id="SSF51182">
    <property type="entry name" value="RmlC-like cupins"/>
    <property type="match status" value="1"/>
</dbReference>
<dbReference type="PROSITE" id="PS00041">
    <property type="entry name" value="HTH_ARAC_FAMILY_1"/>
    <property type="match status" value="1"/>
</dbReference>
<dbReference type="PROSITE" id="PS01124">
    <property type="entry name" value="HTH_ARAC_FAMILY_2"/>
    <property type="match status" value="1"/>
</dbReference>
<proteinExistence type="predicted"/>
<sequence>MDALSKIFDDIHLNKSEYLYVKTQGEWAFHMLAQDALIAHIILMGSAHFTLQDGTTQTAYSGDIVLIPSGQAHFVSNDAQNKLIDCSNIQSFFDGHRNDAIELGTTSSDHGLIFTVRSHIDMHMGSPLLNALPSLIHIHHAMSSTGPEWLRVGLYFVALETQRIQPGRDKIFDHLMSILFIECVRDHIAQLDDPKSWLTALMHPELSNALAAIHAYPEKPWTVESLADQCCMSRSKFATLFQSIVHETPLAYLQQHRLRLAVQLLKTSQLNIQQIANKVGYSSETAFSQAFKRQFEQSPKHYRQQS</sequence>
<comment type="function">
    <text evidence="2">This protein activates the expression of the alkane 1-monooxygenase AlkM.</text>
</comment>
<comment type="pathway">
    <text>Hydrocarbon metabolism; alkane degradation.</text>
</comment>
<gene>
    <name type="primary">alkR</name>
    <name type="ordered locus">ACIAD1410</name>
</gene>
<feature type="chain" id="PRO_0000392225" description="HTH-type transcriptional regulator AlkR">
    <location>
        <begin position="1"/>
        <end position="306"/>
    </location>
</feature>
<feature type="domain" description="HTH araC/xylS-type" evidence="1">
    <location>
        <begin position="207"/>
        <end position="305"/>
    </location>
</feature>
<feature type="DNA-binding region" description="H-T-H motif" evidence="1">
    <location>
        <begin position="224"/>
        <end position="245"/>
    </location>
</feature>
<feature type="DNA-binding region" description="H-T-H motif" evidence="1">
    <location>
        <begin position="272"/>
        <end position="295"/>
    </location>
</feature>
<name>ALKR_ACIAD</name>
<organism>
    <name type="scientific">Acinetobacter baylyi (strain ATCC 33305 / BD413 / ADP1)</name>
    <dbReference type="NCBI Taxonomy" id="62977"/>
    <lineage>
        <taxon>Bacteria</taxon>
        <taxon>Pseudomonadati</taxon>
        <taxon>Pseudomonadota</taxon>
        <taxon>Gammaproteobacteria</taxon>
        <taxon>Moraxellales</taxon>
        <taxon>Moraxellaceae</taxon>
        <taxon>Acinetobacter</taxon>
    </lineage>
</organism>
<protein>
    <recommendedName>
        <fullName>HTH-type transcriptional regulator AlkR</fullName>
    </recommendedName>
</protein>
<reference key="1">
    <citation type="journal article" date="1998" name="Appl. Environ. Microbiol.">
        <title>Alkane hydroxylase from Acinetobacter sp. strain ADP1 is encoded by alkM and belongs to a new family of bacterial integral-membrane hydrocarbon hydroxylases.</title>
        <authorList>
            <person name="Ratajczak A."/>
            <person name="Geissdorfer W."/>
            <person name="Hillen W."/>
        </authorList>
    </citation>
    <scope>NUCLEOTIDE SEQUENCE [GENOMIC DNA]</scope>
</reference>
<reference key="2">
    <citation type="journal article" date="2004" name="Nucleic Acids Res.">
        <title>Unique features revealed by the genome sequence of Acinetobacter sp. ADP1, a versatile and naturally transformation competent bacterium.</title>
        <authorList>
            <person name="Barbe V."/>
            <person name="Vallenet D."/>
            <person name="Fonknechten N."/>
            <person name="Kreimeyer A."/>
            <person name="Oztas S."/>
            <person name="Labarre L."/>
            <person name="Cruveiller S."/>
            <person name="Robert C."/>
            <person name="Duprat S."/>
            <person name="Wincker P."/>
            <person name="Ornston L.N."/>
            <person name="Weissenbach J."/>
            <person name="Marliere P."/>
            <person name="Cohen G.N."/>
            <person name="Medigue C."/>
        </authorList>
    </citation>
    <scope>NUCLEOTIDE SEQUENCE [LARGE SCALE GENOMIC DNA]</scope>
    <source>
        <strain>ATCC 33305 / BD413 / ADP1</strain>
    </source>
</reference>
<reference key="3">
    <citation type="journal article" date="1998" name="J. Bacteriol.">
        <title>Expression of alkane hydroxylase from Acinetobacter sp. Strain ADP1 is induced by a broad range of n-alkanes and requires the transcriptional activator AlkR.</title>
        <authorList>
            <person name="Ratajczak A."/>
            <person name="Geissdorfer W."/>
            <person name="Hillen W."/>
        </authorList>
    </citation>
    <scope>FUNCTION</scope>
</reference>